<gene>
    <name type="primary">perR</name>
    <name type="ordered locus">SE_1545</name>
</gene>
<dbReference type="EMBL" id="AE015929">
    <property type="protein sequence ID" value="AAO05144.1"/>
    <property type="molecule type" value="Genomic_DNA"/>
</dbReference>
<dbReference type="RefSeq" id="NP_765100.1">
    <property type="nucleotide sequence ID" value="NC_004461.1"/>
</dbReference>
<dbReference type="RefSeq" id="WP_001830391.1">
    <property type="nucleotide sequence ID" value="NZ_WBME01000089.1"/>
</dbReference>
<dbReference type="SMR" id="Q8CNQ7"/>
<dbReference type="GeneID" id="50018354"/>
<dbReference type="KEGG" id="sep:SE_1545"/>
<dbReference type="PATRIC" id="fig|176280.10.peg.1510"/>
<dbReference type="eggNOG" id="COG0735">
    <property type="taxonomic scope" value="Bacteria"/>
</dbReference>
<dbReference type="HOGENOM" id="CLU_096072_4_2_9"/>
<dbReference type="OrthoDB" id="8659436at2"/>
<dbReference type="Proteomes" id="UP000001411">
    <property type="component" value="Chromosome"/>
</dbReference>
<dbReference type="GO" id="GO:0005737">
    <property type="term" value="C:cytoplasm"/>
    <property type="evidence" value="ECO:0007669"/>
    <property type="project" value="UniProtKB-SubCell"/>
</dbReference>
<dbReference type="GO" id="GO:0003700">
    <property type="term" value="F:DNA-binding transcription factor activity"/>
    <property type="evidence" value="ECO:0007669"/>
    <property type="project" value="InterPro"/>
</dbReference>
<dbReference type="GO" id="GO:0000976">
    <property type="term" value="F:transcription cis-regulatory region binding"/>
    <property type="evidence" value="ECO:0007669"/>
    <property type="project" value="TreeGrafter"/>
</dbReference>
<dbReference type="GO" id="GO:0008270">
    <property type="term" value="F:zinc ion binding"/>
    <property type="evidence" value="ECO:0007669"/>
    <property type="project" value="TreeGrafter"/>
</dbReference>
<dbReference type="GO" id="GO:0045892">
    <property type="term" value="P:negative regulation of DNA-templated transcription"/>
    <property type="evidence" value="ECO:0007669"/>
    <property type="project" value="TreeGrafter"/>
</dbReference>
<dbReference type="GO" id="GO:1900376">
    <property type="term" value="P:regulation of secondary metabolite biosynthetic process"/>
    <property type="evidence" value="ECO:0007669"/>
    <property type="project" value="TreeGrafter"/>
</dbReference>
<dbReference type="CDD" id="cd07153">
    <property type="entry name" value="Fur_like"/>
    <property type="match status" value="1"/>
</dbReference>
<dbReference type="FunFam" id="1.10.10.10:FF:000007">
    <property type="entry name" value="Ferric uptake regulation protein"/>
    <property type="match status" value="1"/>
</dbReference>
<dbReference type="FunFam" id="3.30.1490.190:FF:000003">
    <property type="entry name" value="Fur family transcriptional regulator"/>
    <property type="match status" value="1"/>
</dbReference>
<dbReference type="Gene3D" id="3.30.1490.190">
    <property type="match status" value="1"/>
</dbReference>
<dbReference type="Gene3D" id="1.10.10.10">
    <property type="entry name" value="Winged helix-like DNA-binding domain superfamily/Winged helix DNA-binding domain"/>
    <property type="match status" value="1"/>
</dbReference>
<dbReference type="InterPro" id="IPR002481">
    <property type="entry name" value="FUR"/>
</dbReference>
<dbReference type="InterPro" id="IPR043135">
    <property type="entry name" value="Fur_C"/>
</dbReference>
<dbReference type="InterPro" id="IPR036388">
    <property type="entry name" value="WH-like_DNA-bd_sf"/>
</dbReference>
<dbReference type="InterPro" id="IPR036390">
    <property type="entry name" value="WH_DNA-bd_sf"/>
</dbReference>
<dbReference type="PANTHER" id="PTHR33202:SF8">
    <property type="entry name" value="PEROXIDE-RESPONSIVE REPRESSOR PERR"/>
    <property type="match status" value="1"/>
</dbReference>
<dbReference type="PANTHER" id="PTHR33202">
    <property type="entry name" value="ZINC UPTAKE REGULATION PROTEIN"/>
    <property type="match status" value="1"/>
</dbReference>
<dbReference type="Pfam" id="PF01475">
    <property type="entry name" value="FUR"/>
    <property type="match status" value="1"/>
</dbReference>
<dbReference type="SUPFAM" id="SSF46785">
    <property type="entry name" value="Winged helix' DNA-binding domain"/>
    <property type="match status" value="1"/>
</dbReference>
<accession>Q8CNQ7</accession>
<comment type="function">
    <text evidence="1">Manganese-dependent repressor that controls a regulon of oxidative stress resistance and iron-storage proteins. May act as a hydrogen peroxide and organic hydroperoxide sensor (By similarity).</text>
</comment>
<comment type="subcellular location">
    <subcellularLocation>
        <location evidence="1">Cytoplasm</location>
    </subcellularLocation>
</comment>
<comment type="similarity">
    <text evidence="2">Belongs to the Fur family.</text>
</comment>
<name>PERR_STAES</name>
<proteinExistence type="inferred from homology"/>
<sequence length="150" mass="17280">MSAELESIDHELEESIASLRKAGVRITPQRQAIMRYLISSHSHPTADEIYQALSPKFPNISVATIYNNLRVFKDIGIVKELTYGDSSSRFDFNTHNHYHIICEKCGKIVDFHYPQLDEVEQLAQHVTDFDVTHHRMEIYGVCKECKEEGN</sequence>
<organism>
    <name type="scientific">Staphylococcus epidermidis (strain ATCC 12228 / FDA PCI 1200)</name>
    <dbReference type="NCBI Taxonomy" id="176280"/>
    <lineage>
        <taxon>Bacteria</taxon>
        <taxon>Bacillati</taxon>
        <taxon>Bacillota</taxon>
        <taxon>Bacilli</taxon>
        <taxon>Bacillales</taxon>
        <taxon>Staphylococcaceae</taxon>
        <taxon>Staphylococcus</taxon>
    </lineage>
</organism>
<reference key="1">
    <citation type="journal article" date="2003" name="Mol. Microbiol.">
        <title>Genome-based analysis of virulence genes in a non-biofilm-forming Staphylococcus epidermidis strain (ATCC 12228).</title>
        <authorList>
            <person name="Zhang Y.-Q."/>
            <person name="Ren S.-X."/>
            <person name="Li H.-L."/>
            <person name="Wang Y.-X."/>
            <person name="Fu G."/>
            <person name="Yang J."/>
            <person name="Qin Z.-Q."/>
            <person name="Miao Y.-G."/>
            <person name="Wang W.-Y."/>
            <person name="Chen R.-S."/>
            <person name="Shen Y."/>
            <person name="Chen Z."/>
            <person name="Yuan Z.-H."/>
            <person name="Zhao G.-P."/>
            <person name="Qu D."/>
            <person name="Danchin A."/>
            <person name="Wen Y.-M."/>
        </authorList>
    </citation>
    <scope>NUCLEOTIDE SEQUENCE [LARGE SCALE GENOMIC DNA]</scope>
    <source>
        <strain>ATCC 12228 / FDA PCI 1200</strain>
    </source>
</reference>
<feature type="chain" id="PRO_0000289019" description="Peroxide-responsive repressor PerR">
    <location>
        <begin position="1"/>
        <end position="150"/>
    </location>
</feature>
<feature type="region of interest" description="DNA-binding" evidence="1">
    <location>
        <begin position="1"/>
        <end position="84"/>
    </location>
</feature>
<feature type="binding site" evidence="1">
    <location>
        <position position="102"/>
    </location>
    <ligand>
        <name>Zn(2+)</name>
        <dbReference type="ChEBI" id="CHEBI:29105"/>
    </ligand>
</feature>
<feature type="binding site" evidence="1">
    <location>
        <position position="105"/>
    </location>
    <ligand>
        <name>Zn(2+)</name>
        <dbReference type="ChEBI" id="CHEBI:29105"/>
    </ligand>
</feature>
<feature type="binding site" evidence="1">
    <location>
        <position position="142"/>
    </location>
    <ligand>
        <name>Zn(2+)</name>
        <dbReference type="ChEBI" id="CHEBI:29105"/>
    </ligand>
</feature>
<feature type="binding site" evidence="1">
    <location>
        <position position="145"/>
    </location>
    <ligand>
        <name>Zn(2+)</name>
        <dbReference type="ChEBI" id="CHEBI:29105"/>
    </ligand>
</feature>
<keyword id="KW-0963">Cytoplasm</keyword>
<keyword id="KW-0238">DNA-binding</keyword>
<keyword id="KW-0464">Manganese</keyword>
<keyword id="KW-0479">Metal-binding</keyword>
<keyword id="KW-0678">Repressor</keyword>
<keyword id="KW-0804">Transcription</keyword>
<keyword id="KW-0805">Transcription regulation</keyword>
<keyword id="KW-0862">Zinc</keyword>
<evidence type="ECO:0000250" key="1"/>
<evidence type="ECO:0000305" key="2"/>
<protein>
    <recommendedName>
        <fullName>Peroxide-responsive repressor PerR</fullName>
    </recommendedName>
</protein>